<comment type="function">
    <text evidence="1">Chemotactic-signal transducers respond to changes in the concentration of attractants and repellents in the environment, transduce a signal from the outside to the inside of the cell, and facilitate sensory adaptation through the variation of the level of methylation.</text>
</comment>
<comment type="pathway">
    <text>Hydrocarbon metabolism; alkane degradation.</text>
</comment>
<comment type="subcellular location">
    <subcellularLocation>
        <location evidence="5">Membrane</location>
        <topology evidence="5">Multi-pass membrane protein</topology>
    </subcellularLocation>
</comment>
<comment type="similarity">
    <text evidence="5">Belongs to the methyl-accepting chemotaxis (MCP) protein family.</text>
</comment>
<reference key="1">
    <citation type="journal article" date="2006" name="Nat. Biotechnol.">
        <title>Genome sequence of the ubiquitous hydrocarbon-degrading marine bacterium Alcanivorax borkumensis.</title>
        <authorList>
            <person name="Schneiker S."/>
            <person name="Martins dos Santos V.A.P."/>
            <person name="Bartels D."/>
            <person name="Bekel T."/>
            <person name="Brecht M."/>
            <person name="Buhrmester J."/>
            <person name="Chernikova T.N."/>
            <person name="Denaro R."/>
            <person name="Ferrer M."/>
            <person name="Gertler C."/>
            <person name="Goesmann A."/>
            <person name="Golyshina O.V."/>
            <person name="Kaminski F."/>
            <person name="Khachane A.N."/>
            <person name="Lang S."/>
            <person name="Linke B."/>
            <person name="McHardy A.C."/>
            <person name="Meyer F."/>
            <person name="Nechitaylo T."/>
            <person name="Puehler A."/>
            <person name="Regenhardt D."/>
            <person name="Rupp O."/>
            <person name="Sabirova J.S."/>
            <person name="Selbitschka W."/>
            <person name="Yakimov M.M."/>
            <person name="Timmis K.N."/>
            <person name="Vorhoelter F.-J."/>
            <person name="Weidner S."/>
            <person name="Kaiser O."/>
            <person name="Golyshin P.N."/>
        </authorList>
    </citation>
    <scope>NUCLEOTIDE SEQUENCE [LARGE SCALE GENOMIC DNA]</scope>
    <source>
        <strain>ATCC 700651 / DSM 11573 / NCIMB 13689 / SK2</strain>
    </source>
</reference>
<protein>
    <recommendedName>
        <fullName>Putative methyl-accepting chemotaxis AlkN</fullName>
    </recommendedName>
</protein>
<accession>Q0VTI9</accession>
<sequence>MKFNSGALFEKLRGGAGEGNTLNIALYVGLAIFIVLALANFLLSATTANKAQENITRASEMRVISQQIAKNALEAAAGNADAFELLDKSQKGFQSAWNAVKDEQVSDPEAMARLQTLWDEVNANADVILKGEDTVLDLHEVADTLAQTIPSLQAEYEGVVEILVTTDAAPEQIAFAQRQSWLAERIVRSIAKVLEGGDGAVIAADSFGRDASLFGRIMNGMIEGDAAMGIDQVNDPDALDYLAEIADLFDEFVNQSVDEILETAPELFQVRNAADTIFRRSQDLLEESTNLNNQFENTTSGLFPSVWLGGVSAGLAVLFFFIIMAQRNRQAAKLKDELESENQRNQAAILRLLDELGDLADGDLTVQATVTEDFTGAIADSINYSIDQLRNLVQTINNSAVQVASAAQETQSTAMHLAEASEHQAQEIAGASAAVNEMAVSIDQVSANAAESAAVAERAVAIANKGAEVVQATIHGMDTIREQIQETSKRIKRLGESSQEIGDIVSLINDIADQTNILALNAAIQASMAGEAGRGFAVVADEVQRLAERSAAATKQIETLVKTIQTDTNEAVISMEATTAEVVKGARLAQDAGVALEEIESVSKTLADLIQNISNAARQQAASAGHISNTMNVIQEITSQTSAGTTATARSIGNLAEMAQDMRNSVAGFRLPEHS</sequence>
<name>ALKN_ALCBS</name>
<organism>
    <name type="scientific">Alcanivorax borkumensis (strain ATCC 700651 / DSM 11573 / NCIMB 13689 / SK2)</name>
    <dbReference type="NCBI Taxonomy" id="393595"/>
    <lineage>
        <taxon>Bacteria</taxon>
        <taxon>Pseudomonadati</taxon>
        <taxon>Pseudomonadota</taxon>
        <taxon>Gammaproteobacteria</taxon>
        <taxon>Oceanospirillales</taxon>
        <taxon>Alcanivoracaceae</taxon>
        <taxon>Alcanivorax</taxon>
    </lineage>
</organism>
<evidence type="ECO:0000250" key="1"/>
<evidence type="ECO:0000255" key="2"/>
<evidence type="ECO:0000255" key="3">
    <source>
        <dbReference type="PROSITE-ProRule" id="PRU00102"/>
    </source>
</evidence>
<evidence type="ECO:0000255" key="4">
    <source>
        <dbReference type="PROSITE-ProRule" id="PRU00284"/>
    </source>
</evidence>
<evidence type="ECO:0000305" key="5"/>
<dbReference type="EMBL" id="AM286690">
    <property type="protein sequence ID" value="CAL15554.1"/>
    <property type="molecule type" value="Genomic_DNA"/>
</dbReference>
<dbReference type="RefSeq" id="WP_011587404.1">
    <property type="nucleotide sequence ID" value="NC_008260.1"/>
</dbReference>
<dbReference type="SMR" id="Q0VTI9"/>
<dbReference type="STRING" id="393595.ABO_0106"/>
<dbReference type="KEGG" id="abo:ABO_0106"/>
<dbReference type="eggNOG" id="COG0840">
    <property type="taxonomic scope" value="Bacteria"/>
</dbReference>
<dbReference type="HOGENOM" id="CLU_000445_107_27_6"/>
<dbReference type="OrthoDB" id="9177152at2"/>
<dbReference type="UniPathway" id="UPA00191"/>
<dbReference type="Proteomes" id="UP000008871">
    <property type="component" value="Chromosome"/>
</dbReference>
<dbReference type="GO" id="GO:0016020">
    <property type="term" value="C:membrane"/>
    <property type="evidence" value="ECO:0007669"/>
    <property type="project" value="UniProtKB-SubCell"/>
</dbReference>
<dbReference type="GO" id="GO:0004888">
    <property type="term" value="F:transmembrane signaling receptor activity"/>
    <property type="evidence" value="ECO:0007669"/>
    <property type="project" value="InterPro"/>
</dbReference>
<dbReference type="GO" id="GO:0043448">
    <property type="term" value="P:alkane catabolic process"/>
    <property type="evidence" value="ECO:0007669"/>
    <property type="project" value="UniProtKB-UniPathway"/>
</dbReference>
<dbReference type="GO" id="GO:0006935">
    <property type="term" value="P:chemotaxis"/>
    <property type="evidence" value="ECO:0007669"/>
    <property type="project" value="InterPro"/>
</dbReference>
<dbReference type="GO" id="GO:0007165">
    <property type="term" value="P:signal transduction"/>
    <property type="evidence" value="ECO:0007669"/>
    <property type="project" value="UniProtKB-KW"/>
</dbReference>
<dbReference type="CDD" id="cd11386">
    <property type="entry name" value="MCP_signal"/>
    <property type="match status" value="1"/>
</dbReference>
<dbReference type="FunFam" id="1.10.287.950:FF:000001">
    <property type="entry name" value="Methyl-accepting chemotaxis sensory transducer"/>
    <property type="match status" value="1"/>
</dbReference>
<dbReference type="Gene3D" id="1.10.287.950">
    <property type="entry name" value="Methyl-accepting chemotaxis protein"/>
    <property type="match status" value="1"/>
</dbReference>
<dbReference type="InterPro" id="IPR004090">
    <property type="entry name" value="Chemotax_Me-accpt_rcpt"/>
</dbReference>
<dbReference type="InterPro" id="IPR003660">
    <property type="entry name" value="HAMP_dom"/>
</dbReference>
<dbReference type="InterPro" id="IPR004089">
    <property type="entry name" value="MCPsignal_dom"/>
</dbReference>
<dbReference type="InterPro" id="IPR029095">
    <property type="entry name" value="NarX-like_N"/>
</dbReference>
<dbReference type="PANTHER" id="PTHR32089:SF119">
    <property type="entry name" value="METHYL-ACCEPTING CHEMOTAXIS PROTEIN CTPL"/>
    <property type="match status" value="1"/>
</dbReference>
<dbReference type="PANTHER" id="PTHR32089">
    <property type="entry name" value="METHYL-ACCEPTING CHEMOTAXIS PROTEIN MCPB"/>
    <property type="match status" value="1"/>
</dbReference>
<dbReference type="Pfam" id="PF00015">
    <property type="entry name" value="MCPsignal"/>
    <property type="match status" value="1"/>
</dbReference>
<dbReference type="Pfam" id="PF13675">
    <property type="entry name" value="PilJ"/>
    <property type="match status" value="1"/>
</dbReference>
<dbReference type="PRINTS" id="PR00260">
    <property type="entry name" value="CHEMTRNSDUCR"/>
</dbReference>
<dbReference type="SMART" id="SM00283">
    <property type="entry name" value="MA"/>
    <property type="match status" value="1"/>
</dbReference>
<dbReference type="SUPFAM" id="SSF58104">
    <property type="entry name" value="Methyl-accepting chemotaxis protein (MCP) signaling domain"/>
    <property type="match status" value="1"/>
</dbReference>
<dbReference type="PROSITE" id="PS50111">
    <property type="entry name" value="CHEMOTAXIS_TRANSDUC_2"/>
    <property type="match status" value="1"/>
</dbReference>
<dbReference type="PROSITE" id="PS50885">
    <property type="entry name" value="HAMP"/>
    <property type="match status" value="1"/>
</dbReference>
<proteinExistence type="inferred from homology"/>
<keyword id="KW-0472">Membrane</keyword>
<keyword id="KW-1185">Reference proteome</keyword>
<keyword id="KW-0807">Transducer</keyword>
<keyword id="KW-0812">Transmembrane</keyword>
<keyword id="KW-1133">Transmembrane helix</keyword>
<gene>
    <name type="ordered locus">ABO_0106</name>
</gene>
<feature type="chain" id="PRO_0000392221" description="Putative methyl-accepting chemotaxis AlkN">
    <location>
        <begin position="1"/>
        <end position="675"/>
    </location>
</feature>
<feature type="transmembrane region" description="Helical" evidence="2">
    <location>
        <begin position="24"/>
        <end position="44"/>
    </location>
</feature>
<feature type="transmembrane region" description="Helical" evidence="2">
    <location>
        <begin position="303"/>
        <end position="323"/>
    </location>
</feature>
<feature type="domain" description="HAMP" evidence="3">
    <location>
        <begin position="343"/>
        <end position="394"/>
    </location>
</feature>
<feature type="domain" description="Methyl-accepting transducer" evidence="4">
    <location>
        <begin position="399"/>
        <end position="635"/>
    </location>
</feature>